<protein>
    <recommendedName>
        <fullName>RING finger protein 112</fullName>
        <ecNumber evidence="8">2.3.2.27</ecNumber>
    </recommendedName>
    <alternativeName>
        <fullName>Brain finger protein</fullName>
    </alternativeName>
    <alternativeName>
        <fullName>Zinc finger protein 179</fullName>
    </alternativeName>
</protein>
<feature type="chain" id="PRO_0000056301" description="RING finger protein 112">
    <location>
        <begin position="1"/>
        <end position="631"/>
    </location>
</feature>
<feature type="transmembrane region" description="Helical" evidence="2">
    <location>
        <begin position="547"/>
        <end position="567"/>
    </location>
</feature>
<feature type="transmembrane region" description="Helical" evidence="2">
    <location>
        <begin position="580"/>
        <end position="600"/>
    </location>
</feature>
<feature type="domain" description="GB1/RHD3-type G" evidence="4">
    <location>
        <begin position="166"/>
        <end position="397"/>
    </location>
</feature>
<feature type="zinc finger region" description="RING-type" evidence="3">
    <location>
        <begin position="57"/>
        <end position="98"/>
    </location>
</feature>
<feature type="region of interest" description="Interaction with ZBTB16" evidence="1">
    <location>
        <begin position="131"/>
        <end position="631"/>
    </location>
</feature>
<feature type="binding site" evidence="1">
    <location>
        <begin position="318"/>
        <end position="319"/>
    </location>
    <ligand>
        <name>GTP</name>
        <dbReference type="ChEBI" id="CHEBI:37565"/>
    </ligand>
</feature>
<feature type="splice variant" id="VSP_042377" description="In isoform 2." evidence="7">
    <original>P</original>
    <variation>PG</variation>
    <location>
        <position position="374"/>
    </location>
</feature>
<keyword id="KW-0025">Alternative splicing</keyword>
<keyword id="KW-0966">Cell projection</keyword>
<keyword id="KW-0963">Cytoplasm</keyword>
<keyword id="KW-0968">Cytoplasmic vesicle</keyword>
<keyword id="KW-0967">Endosome</keyword>
<keyword id="KW-0342">GTP-binding</keyword>
<keyword id="KW-0472">Membrane</keyword>
<keyword id="KW-0479">Metal-binding</keyword>
<keyword id="KW-0524">Neurogenesis</keyword>
<keyword id="KW-0547">Nucleotide-binding</keyword>
<keyword id="KW-0539">Nucleus</keyword>
<keyword id="KW-1267">Proteomics identification</keyword>
<keyword id="KW-1185">Reference proteome</keyword>
<keyword id="KW-0770">Synapse</keyword>
<keyword id="KW-0808">Transferase</keyword>
<keyword id="KW-0812">Transmembrane</keyword>
<keyword id="KW-1133">Transmembrane helix</keyword>
<keyword id="KW-0832">Ubl conjugation</keyword>
<keyword id="KW-0833">Ubl conjugation pathway</keyword>
<keyword id="KW-0862">Zinc</keyword>
<keyword id="KW-0863">Zinc-finger</keyword>
<dbReference type="EC" id="2.3.2.27" evidence="8"/>
<dbReference type="EMBL" id="AB026054">
    <property type="protein sequence ID" value="BAA84698.1"/>
    <property type="molecule type" value="mRNA"/>
</dbReference>
<dbReference type="EMBL" id="AC004448">
    <property type="status" value="NOT_ANNOTATED_CDS"/>
    <property type="molecule type" value="Genomic_DNA"/>
</dbReference>
<dbReference type="EMBL" id="BC053989">
    <property type="protein sequence ID" value="AAH53989.1"/>
    <property type="molecule type" value="mRNA"/>
</dbReference>
<dbReference type="EMBL" id="AF054587">
    <property type="protein sequence ID" value="AAC08584.1"/>
    <property type="molecule type" value="Genomic_DNA"/>
</dbReference>
<dbReference type="CCDS" id="CCDS58529.1">
    <molecule id="Q9ULX5-1"/>
</dbReference>
<dbReference type="PIR" id="JC7155">
    <property type="entry name" value="JC7155"/>
</dbReference>
<dbReference type="RefSeq" id="NP_009079.2">
    <molecule id="Q9ULX5-1"/>
    <property type="nucleotide sequence ID" value="NM_007148.5"/>
</dbReference>
<dbReference type="SMR" id="Q9ULX5"/>
<dbReference type="BioGRID" id="113520">
    <property type="interactions" value="4"/>
</dbReference>
<dbReference type="FunCoup" id="Q9ULX5">
    <property type="interactions" value="18"/>
</dbReference>
<dbReference type="IntAct" id="Q9ULX5">
    <property type="interactions" value="23"/>
</dbReference>
<dbReference type="STRING" id="9606.ENSP00000454919"/>
<dbReference type="iPTMnet" id="Q9ULX5"/>
<dbReference type="PhosphoSitePlus" id="Q9ULX5"/>
<dbReference type="BioMuta" id="RNF112"/>
<dbReference type="DMDM" id="378405197"/>
<dbReference type="MassIVE" id="Q9ULX5"/>
<dbReference type="PaxDb" id="9606-ENSP00000454919"/>
<dbReference type="PeptideAtlas" id="Q9ULX5"/>
<dbReference type="ProteomicsDB" id="85146">
    <molecule id="Q9ULX5-1"/>
</dbReference>
<dbReference type="ProteomicsDB" id="85147">
    <molecule id="Q9ULX5-2"/>
</dbReference>
<dbReference type="Antibodypedia" id="3002">
    <property type="antibodies" value="159 antibodies from 23 providers"/>
</dbReference>
<dbReference type="DNASU" id="7732"/>
<dbReference type="Ensembl" id="ENST00000461366.2">
    <molecule id="Q9ULX5-1"/>
    <property type="protein sequence ID" value="ENSP00000454919.1"/>
    <property type="gene ID" value="ENSG00000128482.16"/>
</dbReference>
<dbReference type="GeneID" id="7732"/>
<dbReference type="KEGG" id="hsa:7732"/>
<dbReference type="MANE-Select" id="ENST00000461366.2">
    <property type="protein sequence ID" value="ENSP00000454919.1"/>
    <property type="RefSeq nucleotide sequence ID" value="NM_007148.5"/>
    <property type="RefSeq protein sequence ID" value="NP_009079.2"/>
</dbReference>
<dbReference type="UCSC" id="uc010vyw.3">
    <molecule id="Q9ULX5-1"/>
    <property type="organism name" value="human"/>
</dbReference>
<dbReference type="AGR" id="HGNC:12968"/>
<dbReference type="CTD" id="7732"/>
<dbReference type="DisGeNET" id="7732"/>
<dbReference type="GeneCards" id="RNF112"/>
<dbReference type="HGNC" id="HGNC:12968">
    <property type="gene designation" value="RNF112"/>
</dbReference>
<dbReference type="HPA" id="ENSG00000128482">
    <property type="expression patterns" value="Tissue enriched (brain)"/>
</dbReference>
<dbReference type="MIM" id="601237">
    <property type="type" value="gene"/>
</dbReference>
<dbReference type="neXtProt" id="NX_Q9ULX5"/>
<dbReference type="OpenTargets" id="ENSG00000128482"/>
<dbReference type="VEuPathDB" id="HostDB:ENSG00000128482"/>
<dbReference type="eggNOG" id="KOG2037">
    <property type="taxonomic scope" value="Eukaryota"/>
</dbReference>
<dbReference type="eggNOG" id="KOG2177">
    <property type="taxonomic scope" value="Eukaryota"/>
</dbReference>
<dbReference type="GeneTree" id="ENSGT00940000160153"/>
<dbReference type="HOGENOM" id="CLU_034812_0_0_1"/>
<dbReference type="InParanoid" id="Q9ULX5"/>
<dbReference type="OMA" id="QQDMATK"/>
<dbReference type="OrthoDB" id="6270329at2759"/>
<dbReference type="PAN-GO" id="Q9ULX5">
    <property type="GO annotations" value="4 GO annotations based on evolutionary models"/>
</dbReference>
<dbReference type="PhylomeDB" id="Q9ULX5"/>
<dbReference type="PathwayCommons" id="Q9ULX5"/>
<dbReference type="SignaLink" id="Q9ULX5"/>
<dbReference type="SIGNOR" id="Q9ULX5"/>
<dbReference type="UniPathway" id="UPA00143"/>
<dbReference type="BioGRID-ORCS" id="7732">
    <property type="hits" value="7 hits in 1200 CRISPR screens"/>
</dbReference>
<dbReference type="ChiTaRS" id="RNF112">
    <property type="organism name" value="human"/>
</dbReference>
<dbReference type="GenomeRNAi" id="7732"/>
<dbReference type="Pharos" id="Q9ULX5">
    <property type="development level" value="Tbio"/>
</dbReference>
<dbReference type="PRO" id="PR:Q9ULX5"/>
<dbReference type="Proteomes" id="UP000005640">
    <property type="component" value="Chromosome 17"/>
</dbReference>
<dbReference type="RNAct" id="Q9ULX5">
    <property type="molecule type" value="protein"/>
</dbReference>
<dbReference type="Bgee" id="ENSG00000128482">
    <property type="expression patterns" value="Expressed in right hemisphere of cerebellum and 140 other cell types or tissues"/>
</dbReference>
<dbReference type="ExpressionAtlas" id="Q9ULX5">
    <property type="expression patterns" value="baseline and differential"/>
</dbReference>
<dbReference type="GO" id="GO:0044297">
    <property type="term" value="C:cell body"/>
    <property type="evidence" value="ECO:0000250"/>
    <property type="project" value="UniProtKB"/>
</dbReference>
<dbReference type="GO" id="GO:0005737">
    <property type="term" value="C:cytoplasm"/>
    <property type="evidence" value="ECO:0000250"/>
    <property type="project" value="UniProtKB"/>
</dbReference>
<dbReference type="GO" id="GO:0005768">
    <property type="term" value="C:endosome"/>
    <property type="evidence" value="ECO:0000250"/>
    <property type="project" value="UniProtKB"/>
</dbReference>
<dbReference type="GO" id="GO:0016020">
    <property type="term" value="C:membrane"/>
    <property type="evidence" value="ECO:0007669"/>
    <property type="project" value="UniProtKB-SubCell"/>
</dbReference>
<dbReference type="GO" id="GO:0043005">
    <property type="term" value="C:neuron projection"/>
    <property type="evidence" value="ECO:0007669"/>
    <property type="project" value="UniProtKB-SubCell"/>
</dbReference>
<dbReference type="GO" id="GO:0016604">
    <property type="term" value="C:nuclear body"/>
    <property type="evidence" value="ECO:0000250"/>
    <property type="project" value="UniProtKB"/>
</dbReference>
<dbReference type="GO" id="GO:0005654">
    <property type="term" value="C:nucleoplasm"/>
    <property type="evidence" value="ECO:0000250"/>
    <property type="project" value="UniProtKB"/>
</dbReference>
<dbReference type="GO" id="GO:0005634">
    <property type="term" value="C:nucleus"/>
    <property type="evidence" value="ECO:0000250"/>
    <property type="project" value="UniProtKB"/>
</dbReference>
<dbReference type="GO" id="GO:0043204">
    <property type="term" value="C:perikaryon"/>
    <property type="evidence" value="ECO:0007669"/>
    <property type="project" value="UniProtKB-SubCell"/>
</dbReference>
<dbReference type="GO" id="GO:0014069">
    <property type="term" value="C:postsynaptic density"/>
    <property type="evidence" value="ECO:0000250"/>
    <property type="project" value="UniProtKB"/>
</dbReference>
<dbReference type="GO" id="GO:0008021">
    <property type="term" value="C:synaptic vesicle"/>
    <property type="evidence" value="ECO:0000250"/>
    <property type="project" value="UniProtKB"/>
</dbReference>
<dbReference type="GO" id="GO:0005525">
    <property type="term" value="F:GTP binding"/>
    <property type="evidence" value="ECO:0000250"/>
    <property type="project" value="UniProtKB"/>
</dbReference>
<dbReference type="GO" id="GO:0003924">
    <property type="term" value="F:GTPase activity"/>
    <property type="evidence" value="ECO:0000250"/>
    <property type="project" value="UniProtKB"/>
</dbReference>
<dbReference type="GO" id="GO:0061630">
    <property type="term" value="F:ubiquitin protein ligase activity"/>
    <property type="evidence" value="ECO:0000250"/>
    <property type="project" value="UniProtKB"/>
</dbReference>
<dbReference type="GO" id="GO:0008270">
    <property type="term" value="F:zinc ion binding"/>
    <property type="evidence" value="ECO:0000303"/>
    <property type="project" value="UniProtKB"/>
</dbReference>
<dbReference type="GO" id="GO:1990403">
    <property type="term" value="P:embryonic brain development"/>
    <property type="evidence" value="ECO:0000250"/>
    <property type="project" value="UniProtKB"/>
</dbReference>
<dbReference type="GO" id="GO:0007029">
    <property type="term" value="P:endoplasmic reticulum organization"/>
    <property type="evidence" value="ECO:0000318"/>
    <property type="project" value="GO_Central"/>
</dbReference>
<dbReference type="GO" id="GO:0070315">
    <property type="term" value="P:G1 to G0 transition involved in cell differentiation"/>
    <property type="evidence" value="ECO:0007669"/>
    <property type="project" value="Ensembl"/>
</dbReference>
<dbReference type="GO" id="GO:0030182">
    <property type="term" value="P:neuron differentiation"/>
    <property type="evidence" value="ECO:0000314"/>
    <property type="project" value="UniProtKB"/>
</dbReference>
<dbReference type="GO" id="GO:0045687">
    <property type="term" value="P:positive regulation of glial cell differentiation"/>
    <property type="evidence" value="ECO:0007669"/>
    <property type="project" value="Ensembl"/>
</dbReference>
<dbReference type="GO" id="GO:0045666">
    <property type="term" value="P:positive regulation of neuron differentiation"/>
    <property type="evidence" value="ECO:0007669"/>
    <property type="project" value="Ensembl"/>
</dbReference>
<dbReference type="GO" id="GO:0051865">
    <property type="term" value="P:protein autoubiquitination"/>
    <property type="evidence" value="ECO:0000250"/>
    <property type="project" value="UniProtKB"/>
</dbReference>
<dbReference type="GO" id="GO:0051260">
    <property type="term" value="P:protein homooligomerization"/>
    <property type="evidence" value="ECO:0000318"/>
    <property type="project" value="GO_Central"/>
</dbReference>
<dbReference type="GO" id="GO:0051726">
    <property type="term" value="P:regulation of cell cycle"/>
    <property type="evidence" value="ECO:0000314"/>
    <property type="project" value="UniProtKB"/>
</dbReference>
<dbReference type="GO" id="GO:0033194">
    <property type="term" value="P:response to hydroperoxide"/>
    <property type="evidence" value="ECO:0000250"/>
    <property type="project" value="UniProtKB"/>
</dbReference>
<dbReference type="CDD" id="cd01851">
    <property type="entry name" value="GBP"/>
    <property type="match status" value="1"/>
</dbReference>
<dbReference type="CDD" id="cd16538">
    <property type="entry name" value="RING-HC_RNF112"/>
    <property type="match status" value="1"/>
</dbReference>
<dbReference type="FunFam" id="3.30.40.10:FF:000305">
    <property type="entry name" value="RING finger protein 112"/>
    <property type="match status" value="1"/>
</dbReference>
<dbReference type="FunFam" id="3.40.50.300:FF:001009">
    <property type="entry name" value="RING finger protein 112"/>
    <property type="match status" value="1"/>
</dbReference>
<dbReference type="Gene3D" id="3.40.50.300">
    <property type="entry name" value="P-loop containing nucleotide triphosphate hydrolases"/>
    <property type="match status" value="1"/>
</dbReference>
<dbReference type="Gene3D" id="3.30.40.10">
    <property type="entry name" value="Zinc/RING finger domain, C3HC4 (zinc finger)"/>
    <property type="match status" value="1"/>
</dbReference>
<dbReference type="InterPro" id="IPR030386">
    <property type="entry name" value="G_GB1_RHD3_dom"/>
</dbReference>
<dbReference type="InterPro" id="IPR015894">
    <property type="entry name" value="Guanylate-bd_N"/>
</dbReference>
<dbReference type="InterPro" id="IPR027417">
    <property type="entry name" value="P-loop_NTPase"/>
</dbReference>
<dbReference type="InterPro" id="IPR018957">
    <property type="entry name" value="Znf_C3HC4_RING-type"/>
</dbReference>
<dbReference type="InterPro" id="IPR001841">
    <property type="entry name" value="Znf_RING"/>
</dbReference>
<dbReference type="InterPro" id="IPR013083">
    <property type="entry name" value="Znf_RING/FYVE/PHD"/>
</dbReference>
<dbReference type="PANTHER" id="PTHR10751">
    <property type="entry name" value="GUANYLATE BINDING PROTEIN"/>
    <property type="match status" value="1"/>
</dbReference>
<dbReference type="Pfam" id="PF02263">
    <property type="entry name" value="GBP"/>
    <property type="match status" value="1"/>
</dbReference>
<dbReference type="Pfam" id="PF00097">
    <property type="entry name" value="zf-C3HC4"/>
    <property type="match status" value="1"/>
</dbReference>
<dbReference type="SMART" id="SM00184">
    <property type="entry name" value="RING"/>
    <property type="match status" value="1"/>
</dbReference>
<dbReference type="SUPFAM" id="SSF52540">
    <property type="entry name" value="P-loop containing nucleoside triphosphate hydrolases"/>
    <property type="match status" value="1"/>
</dbReference>
<dbReference type="SUPFAM" id="SSF57850">
    <property type="entry name" value="RING/U-box"/>
    <property type="match status" value="1"/>
</dbReference>
<dbReference type="PROSITE" id="PS51715">
    <property type="entry name" value="G_GB1_RHD3"/>
    <property type="match status" value="1"/>
</dbReference>
<dbReference type="PROSITE" id="PS50089">
    <property type="entry name" value="ZF_RING_2"/>
    <property type="match status" value="1"/>
</dbReference>
<gene>
    <name type="primary">RNF112</name>
    <name type="synonym">BFP</name>
    <name type="synonym">ZNF179</name>
</gene>
<comment type="function">
    <text evidence="1 6">E3 ubiquitin-protein ligase that plays an important role in neuronal differentiation, including neurogenesis and gliogenesis, during brain development. During embryonic development initiates neuronal differentiation by inducing cell cycle arrest at the G0/G1 phase through up-regulation of cell-cycle regulatory proteins (PubMed:28684796). Plays a role not only in the fetal period during the development of the nervous system, but also in the adult brain, where it is involved in the maintenance of neural functions and protection of the nervous tissue cells from oxidative stress-induced damage. Exhibits GTPase and E3 ubiquitin-protein ligase activities. Regulates dendritic spine density and synaptic neurotransmission; its ability to hydrolyze GTP is involved in the maintenance of dendritic spine density (By similarity).</text>
</comment>
<comment type="catalytic activity">
    <reaction evidence="8">
        <text>S-ubiquitinyl-[E2 ubiquitin-conjugating enzyme]-L-cysteine + [acceptor protein]-L-lysine = [E2 ubiquitin-conjugating enzyme]-L-cysteine + N(6)-ubiquitinyl-[acceptor protein]-L-lysine.</text>
        <dbReference type="EC" id="2.3.2.27"/>
    </reaction>
</comment>
<comment type="pathway">
    <text evidence="8">Protein modification; protein ubiquitination.</text>
</comment>
<comment type="subunit">
    <text evidence="1">Self-associates. Interacts with SP1 in an oxidative stress-regulated manner. Interacts with SIGMAR1 in an oxidative stress-regulated manner. Interacts with ZBTB16 (via C2H2-type zinc finger domains 1 and 2).</text>
</comment>
<comment type="interaction">
    <interactant intactId="EBI-25829984">
        <id>Q9ULX5</id>
    </interactant>
    <interactant intactId="EBI-640741">
        <id>P01023</id>
        <label>A2M</label>
    </interactant>
    <organismsDiffer>false</organismsDiffer>
    <experiments>3</experiments>
</comment>
<comment type="interaction">
    <interactant intactId="EBI-25829984">
        <id>Q9ULX5</id>
    </interactant>
    <interactant intactId="EBI-77613">
        <id>P05067</id>
        <label>APP</label>
    </interactant>
    <organismsDiffer>false</organismsDiffer>
    <experiments>3</experiments>
</comment>
<comment type="interaction">
    <interactant intactId="EBI-25829984">
        <id>Q9ULX5</id>
    </interactant>
    <interactant intactId="EBI-17264467">
        <id>P05067-2</id>
        <label>APP</label>
    </interactant>
    <organismsDiffer>false</organismsDiffer>
    <experiments>3</experiments>
</comment>
<comment type="interaction">
    <interactant intactId="EBI-25829984">
        <id>Q9ULX5</id>
    </interactant>
    <interactant intactId="EBI-930964">
        <id>P54253</id>
        <label>ATXN1</label>
    </interactant>
    <organismsDiffer>false</organismsDiffer>
    <experiments>6</experiments>
</comment>
<comment type="interaction">
    <interactant intactId="EBI-25829984">
        <id>Q9ULX5</id>
    </interactant>
    <interactant intactId="EBI-8589586">
        <id>P09172</id>
        <label>DBH</label>
    </interactant>
    <organismsDiffer>false</organismsDiffer>
    <experiments>3</experiments>
</comment>
<comment type="interaction">
    <interactant intactId="EBI-25829984">
        <id>Q9ULX5</id>
    </interactant>
    <interactant intactId="EBI-25840379">
        <id>Q14203-5</id>
        <label>DCTN1</label>
    </interactant>
    <organismsDiffer>false</organismsDiffer>
    <experiments>3</experiments>
</comment>
<comment type="interaction">
    <interactant intactId="EBI-25829984">
        <id>Q9ULX5</id>
    </interactant>
    <interactant intactId="EBI-21603100">
        <id>P26378-2</id>
        <label>ELAVL4</label>
    </interactant>
    <organismsDiffer>false</organismsDiffer>
    <experiments>3</experiments>
</comment>
<comment type="interaction">
    <interactant intactId="EBI-25829984">
        <id>Q9ULX5</id>
    </interactant>
    <interactant intactId="EBI-747754">
        <id>P28799</id>
        <label>GRN</label>
    </interactant>
    <organismsDiffer>false</organismsDiffer>
    <experiments>3</experiments>
</comment>
<comment type="interaction">
    <interactant intactId="EBI-25829984">
        <id>Q9ULX5</id>
    </interactant>
    <interactant intactId="EBI-466029">
        <id>P42858</id>
        <label>HTT</label>
    </interactant>
    <organismsDiffer>false</organismsDiffer>
    <experiments>21</experiments>
</comment>
<comment type="interaction">
    <interactant intactId="EBI-25829984">
        <id>Q9ULX5</id>
    </interactant>
    <interactant intactId="EBI-1189067">
        <id>P51608</id>
        <label>MECP2</label>
    </interactant>
    <organismsDiffer>false</organismsDiffer>
    <experiments>3</experiments>
</comment>
<comment type="interaction">
    <interactant intactId="EBI-25829984">
        <id>Q9ULX5</id>
    </interactant>
    <interactant intactId="EBI-713665">
        <id>P19404</id>
        <label>NDUFV2</label>
    </interactant>
    <organismsDiffer>false</organismsDiffer>
    <experiments>3</experiments>
</comment>
<comment type="interaction">
    <interactant intactId="EBI-25829984">
        <id>Q9ULX5</id>
    </interactant>
    <interactant intactId="EBI-748974">
        <id>Q96CV9</id>
        <label>OPTN</label>
    </interactant>
    <organismsDiffer>false</organismsDiffer>
    <experiments>3</experiments>
</comment>
<comment type="interaction">
    <interactant intactId="EBI-25829984">
        <id>Q9ULX5</id>
    </interactant>
    <interactant intactId="EBI-1164361">
        <id>Q99497</id>
        <label>PARK7</label>
    </interactant>
    <organismsDiffer>false</organismsDiffer>
    <experiments>3</experiments>
</comment>
<comment type="interaction">
    <interactant intactId="EBI-25829984">
        <id>Q9ULX5</id>
    </interactant>
    <interactant intactId="EBI-752057">
        <id>Q7Z412</id>
        <label>PEX26</label>
    </interactant>
    <organismsDiffer>false</organismsDiffer>
    <experiments>3</experiments>
</comment>
<comment type="interaction">
    <interactant intactId="EBI-25829984">
        <id>Q9ULX5</id>
    </interactant>
    <interactant intactId="EBI-721853">
        <id>O14832</id>
        <label>PHYH</label>
    </interactant>
    <organismsDiffer>false</organismsDiffer>
    <experiments>3</experiments>
</comment>
<comment type="interaction">
    <interactant intactId="EBI-25829984">
        <id>Q9ULX5</id>
    </interactant>
    <interactant intactId="EBI-50433196">
        <id>A0A6Q8PF08</id>
        <label>PMP22</label>
    </interactant>
    <organismsDiffer>false</organismsDiffer>
    <experiments>3</experiments>
</comment>
<comment type="interaction">
    <interactant intactId="EBI-25829984">
        <id>Q9ULX5</id>
    </interactant>
    <interactant intactId="EBI-21251460">
        <id>O60260-5</id>
        <label>PRKN</label>
    </interactant>
    <organismsDiffer>false</organismsDiffer>
    <experiments>6</experiments>
</comment>
<comment type="interaction">
    <interactant intactId="EBI-25829984">
        <id>Q9ULX5</id>
    </interactant>
    <interactant intactId="EBI-752074">
        <id>P41219</id>
        <label>PRPH</label>
    </interactant>
    <organismsDiffer>false</organismsDiffer>
    <experiments>3</experiments>
</comment>
<comment type="interaction">
    <interactant intactId="EBI-25829984">
        <id>Q9ULX5</id>
    </interactant>
    <interactant intactId="EBI-11047108">
        <id>P49768-2</id>
        <label>PSEN1</label>
    </interactant>
    <organismsDiffer>false</organismsDiffer>
    <experiments>6</experiments>
</comment>
<comment type="interaction">
    <interactant intactId="EBI-25829984">
        <id>Q9ULX5</id>
    </interactant>
    <interactant intactId="EBI-396669">
        <id>Q9Y3C5</id>
        <label>RNF11</label>
    </interactant>
    <organismsDiffer>false</organismsDiffer>
    <experiments>3</experiments>
</comment>
<comment type="interaction">
    <interactant intactId="EBI-25829984">
        <id>Q9ULX5</id>
    </interactant>
    <interactant intactId="EBI-985879">
        <id>P37840</id>
        <label>SNCA</label>
    </interactant>
    <organismsDiffer>false</organismsDiffer>
    <experiments>3</experiments>
</comment>
<comment type="interaction">
    <interactant intactId="EBI-25829984">
        <id>Q9ULX5</id>
    </interactant>
    <interactant intactId="EBI-990792">
        <id>P00441</id>
        <label>SOD1</label>
    </interactant>
    <organismsDiffer>false</organismsDiffer>
    <experiments>3</experiments>
</comment>
<comment type="interaction">
    <interactant intactId="EBI-25829984">
        <id>Q9ULX5</id>
    </interactant>
    <interactant intactId="EBI-372899">
        <id>Q13148</id>
        <label>TARDBP</label>
    </interactant>
    <organismsDiffer>false</organismsDiffer>
    <experiments>6</experiments>
</comment>
<comment type="interaction">
    <interactant intactId="EBI-25829984">
        <id>Q9ULX5</id>
    </interactant>
    <interactant intactId="EBI-714860">
        <id>P09936</id>
        <label>UCHL1</label>
    </interactant>
    <organismsDiffer>false</organismsDiffer>
    <experiments>3</experiments>
</comment>
<comment type="subcellular location">
    <subcellularLocation>
        <location evidence="1">Membrane</location>
        <topology evidence="2">Multi-pass membrane protein</topology>
    </subcellularLocation>
    <subcellularLocation>
        <location evidence="1">Membrane</location>
        <topology evidence="1">Peripheral membrane protein</topology>
    </subcellularLocation>
    <subcellularLocation>
        <location evidence="1">Cytoplasm</location>
    </subcellularLocation>
    <subcellularLocation>
        <location evidence="1">Nucleus</location>
    </subcellularLocation>
    <subcellularLocation>
        <location evidence="1">Nucleus</location>
        <location evidence="1">Nuclear body</location>
    </subcellularLocation>
    <subcellularLocation>
        <location evidence="1">Nucleus</location>
        <location evidence="1">Nucleoplasm</location>
    </subcellularLocation>
    <subcellularLocation>
        <location evidence="1">Endosome</location>
    </subcellularLocation>
    <subcellularLocation>
        <location evidence="1">Cytoplasmic vesicle</location>
        <location evidence="1">Secretory vesicle</location>
        <location evidence="1">Synaptic vesicle</location>
    </subcellularLocation>
    <subcellularLocation>
        <location evidence="1">Postsynaptic density</location>
    </subcellularLocation>
    <subcellularLocation>
        <location evidence="1">Perikaryon</location>
    </subcellularLocation>
    <subcellularLocation>
        <location evidence="1">Cell projection</location>
        <location evidence="1">Neuron projection</location>
    </subcellularLocation>
    <text evidence="1">Predominantly in the nucleus, but some amounts were also found in the cytoplasm. Oxidative stress stimulates its shuttling from the cytoplasm into the nucleus. Recruited to nuclear bodies via its interaction with ZBTB16. Localizes to the cell soma and neuritis and only slightly to the nucleus in the neurons of most brain areas.</text>
</comment>
<comment type="alternative products">
    <event type="alternative splicing"/>
    <isoform>
        <id>Q9ULX5-1</id>
        <name>1</name>
        <sequence type="displayed"/>
    </isoform>
    <isoform>
        <id>Q9ULX5-2</id>
        <name>2</name>
        <sequence type="described" ref="VSP_042377"/>
    </isoform>
</comment>
<comment type="tissue specificity">
    <text evidence="5 6">Predominantly expressed in brain (PubMed:10574464). Decreased expression in glioma brain tumors as compared to normal brains (at protein level) (PubMed:28684796).</text>
</comment>
<comment type="PTM">
    <text evidence="1">Auto-ubiquitinated.</text>
</comment>
<comment type="similarity">
    <text evidence="4">Belongs to the TRAFAC class dynamin-like GTPase superfamily. GB1/RHD3 GTPase family. GB1 subfamily.</text>
</comment>
<accession>Q9ULX5</accession>
<accession>O60633</accession>
<accession>Q7Z5V9</accession>
<sequence>MPRPALSVTSFCHRLGKRERKQSFMGNSGNSWSHTPFPKLELGLGPQPMAPRELPTCSICLERLRDPISLDCGHDFCIRCFSTHRLPGCEPPCCPECRKICKQKRGLRSLGEKMKLLPQRPLPPALQETCPVRAEPLLLVRINASGGLILRMGAINRCLKHPLARDTPVCLLAVLGEQHSGKSFLLNHLLQGLPGLESGEGGRPRGGEASLQGCRWGANGLARGIWMWSHPFLLGKEGKKVAVFLVDTGDAMSPELSRETRIKLCALTTMLSSYQILSTSQELKDTDLDYLEMFVHVAEVMGKHYGMVPIQHLDLLVRDSSHPNKAGQGHVGNIFQRLSGRYPKVQELLQGKRARCCLLPAPGRRRMNQGHASPGDTDDDFRHLLGAYVSDVLSAAPQHAKSRCQGYWNEGRAVARGDRRLLTGQQLAQEIKNLSGWMGRTGPGFTSPDEMAAQLHDLRKVEAAKREFEEYVRQQDVATKRIFSALRVLPDTMRNLLSTQKDAILARHGVALLCKGRDQTLEALEAELQATAKAFMDSYTMRFCGHLAAVGGAVGAGLMGLAGGVVGAGMAAAALAAEAGMVAAGAAVGATGAAVVGGGVGAGLAATVGCMEKEEDERLLEGDREPLLQEE</sequence>
<name>RN112_HUMAN</name>
<proteinExistence type="evidence at protein level"/>
<organism>
    <name type="scientific">Homo sapiens</name>
    <name type="common">Human</name>
    <dbReference type="NCBI Taxonomy" id="9606"/>
    <lineage>
        <taxon>Eukaryota</taxon>
        <taxon>Metazoa</taxon>
        <taxon>Chordata</taxon>
        <taxon>Craniata</taxon>
        <taxon>Vertebrata</taxon>
        <taxon>Euteleostomi</taxon>
        <taxon>Mammalia</taxon>
        <taxon>Eutheria</taxon>
        <taxon>Euarchontoglires</taxon>
        <taxon>Primates</taxon>
        <taxon>Haplorrhini</taxon>
        <taxon>Catarrhini</taxon>
        <taxon>Hominidae</taxon>
        <taxon>Homo</taxon>
    </lineage>
</organism>
<reference key="1">
    <citation type="journal article" date="1999" name="DNA Res.">
        <title>cDNA cloning of a human brain finger protein, BFP/ZNF179, a member of the RING finger protein family.</title>
        <authorList>
            <person name="Seki N."/>
            <person name="Hattori A."/>
            <person name="Muramatsu M."/>
            <person name="Saito T."/>
        </authorList>
    </citation>
    <scope>NUCLEOTIDE SEQUENCE [MRNA] (ISOFORM 2)</scope>
    <scope>TISSUE SPECIFICITY</scope>
</reference>
<reference key="2">
    <citation type="journal article" date="2006" name="Nature">
        <title>DNA sequence of human chromosome 17 and analysis of rearrangement in the human lineage.</title>
        <authorList>
            <person name="Zody M.C."/>
            <person name="Garber M."/>
            <person name="Adams D.J."/>
            <person name="Sharpe T."/>
            <person name="Harrow J."/>
            <person name="Lupski J.R."/>
            <person name="Nicholson C."/>
            <person name="Searle S.M."/>
            <person name="Wilming L."/>
            <person name="Young S.K."/>
            <person name="Abouelleil A."/>
            <person name="Allen N.R."/>
            <person name="Bi W."/>
            <person name="Bloom T."/>
            <person name="Borowsky M.L."/>
            <person name="Bugalter B.E."/>
            <person name="Butler J."/>
            <person name="Chang J.L."/>
            <person name="Chen C.-K."/>
            <person name="Cook A."/>
            <person name="Corum B."/>
            <person name="Cuomo C.A."/>
            <person name="de Jong P.J."/>
            <person name="DeCaprio D."/>
            <person name="Dewar K."/>
            <person name="FitzGerald M."/>
            <person name="Gilbert J."/>
            <person name="Gibson R."/>
            <person name="Gnerre S."/>
            <person name="Goldstein S."/>
            <person name="Grafham D.V."/>
            <person name="Grocock R."/>
            <person name="Hafez N."/>
            <person name="Hagopian D.S."/>
            <person name="Hart E."/>
            <person name="Norman C.H."/>
            <person name="Humphray S."/>
            <person name="Jaffe D.B."/>
            <person name="Jones M."/>
            <person name="Kamal M."/>
            <person name="Khodiyar V.K."/>
            <person name="LaButti K."/>
            <person name="Laird G."/>
            <person name="Lehoczky J."/>
            <person name="Liu X."/>
            <person name="Lokyitsang T."/>
            <person name="Loveland J."/>
            <person name="Lui A."/>
            <person name="Macdonald P."/>
            <person name="Major J.E."/>
            <person name="Matthews L."/>
            <person name="Mauceli E."/>
            <person name="McCarroll S.A."/>
            <person name="Mihalev A.H."/>
            <person name="Mudge J."/>
            <person name="Nguyen C."/>
            <person name="Nicol R."/>
            <person name="O'Leary S.B."/>
            <person name="Osoegawa K."/>
            <person name="Schwartz D.C."/>
            <person name="Shaw-Smith C."/>
            <person name="Stankiewicz P."/>
            <person name="Steward C."/>
            <person name="Swarbreck D."/>
            <person name="Venkataraman V."/>
            <person name="Whittaker C.A."/>
            <person name="Yang X."/>
            <person name="Zimmer A.R."/>
            <person name="Bradley A."/>
            <person name="Hubbard T."/>
            <person name="Birren B.W."/>
            <person name="Rogers J."/>
            <person name="Lander E.S."/>
            <person name="Nusbaum C."/>
        </authorList>
    </citation>
    <scope>NUCLEOTIDE SEQUENCE [LARGE SCALE GENOMIC DNA]</scope>
</reference>
<reference key="3">
    <citation type="journal article" date="2004" name="Genome Res.">
        <title>The status, quality, and expansion of the NIH full-length cDNA project: the Mammalian Gene Collection (MGC).</title>
        <authorList>
            <consortium name="The MGC Project Team"/>
        </authorList>
    </citation>
    <scope>NUCLEOTIDE SEQUENCE [LARGE SCALE MRNA] (ISOFORM 1)</scope>
    <source>
        <tissue>Brain</tissue>
    </source>
</reference>
<reference key="4">
    <citation type="journal article" date="1996" name="Genomics">
        <title>Chromosome mapping of human (ZNF179), mouse, and rat genes for brain finger protein (bfp), a member of the RING finger family.</title>
        <authorList>
            <person name="Matsuda Y."/>
            <person name="Inoue S."/>
            <person name="Seki N."/>
            <person name="Hosoi T."/>
            <person name="Orimo A."/>
            <person name="Muramatsu M."/>
            <person name="Hori T."/>
        </authorList>
    </citation>
    <scope>NUCLEOTIDE SEQUENCE [GENOMIC DNA] OF 33-127</scope>
</reference>
<reference key="5">
    <citation type="journal article" date="2017" name="Sci. Rep.">
        <title>Znf179 induces differentiation and growth arrest of human primary glioblastoma multiforme in a p53-dependent cell cycle pathway.</title>
        <authorList>
            <person name="Lee K.H."/>
            <person name="Chen C.L."/>
            <person name="Lee Y.C."/>
            <person name="Kao T.J."/>
            <person name="Chen K.Y."/>
            <person name="Fang C.Y."/>
            <person name="Chang W.C."/>
            <person name="Chiang Y.H."/>
            <person name="Huang C.C."/>
        </authorList>
    </citation>
    <scope>FUNCTION</scope>
    <scope>TISSUE SPECIFICITY</scope>
</reference>
<evidence type="ECO:0000250" key="1">
    <source>
        <dbReference type="UniProtKB" id="Q96DY5"/>
    </source>
</evidence>
<evidence type="ECO:0000255" key="2"/>
<evidence type="ECO:0000255" key="3">
    <source>
        <dbReference type="PROSITE-ProRule" id="PRU00175"/>
    </source>
</evidence>
<evidence type="ECO:0000255" key="4">
    <source>
        <dbReference type="PROSITE-ProRule" id="PRU01052"/>
    </source>
</evidence>
<evidence type="ECO:0000269" key="5">
    <source>
    </source>
</evidence>
<evidence type="ECO:0000269" key="6">
    <source>
    </source>
</evidence>
<evidence type="ECO:0000303" key="7">
    <source>
    </source>
</evidence>
<evidence type="ECO:0000305" key="8"/>